<comment type="function">
    <text evidence="1">Usually encoded in the trnK tRNA gene intron. Probably assists in splicing its own and other chloroplast group II introns.</text>
</comment>
<comment type="subcellular location">
    <subcellularLocation>
        <location>Plastid</location>
        <location>Chloroplast</location>
    </subcellularLocation>
</comment>
<comment type="similarity">
    <text evidence="1">Belongs to the intron maturase 2 family. MatK subfamily.</text>
</comment>
<sequence length="502" mass="59890">MXXXXGYLEFDGARQQSFLYPLFFREYIYVLAYDQGLNRLNRNRSIFLENADYDKKYSSLIVKRLILRMYEQNRLIIPTKGLNKNLGHTNLFYYQMISVLFAVIVEIPFSLRLGSSFEGKKLKKSYNLQSIHSIFPFLEDKFSHFNYVLDVLIPYPIHLEILVQTLRYRVKDASSLHFFRFCLYEYCNWKNFYSKKKSILNPRFLLFLYNSHVCEYESIFFFLRKRSSHLRSTSYEVFFERILFYGKIQHFLKVFINNFPAILGLLKDPFLHYVRYHGKCILATKDTPLLMNKWKYYFVNLWQCYFSVWFQSQKVNINKLSKDNLEFLGYLSSLRLNPLVVRSQMLENSFLIDNVRIKLDSKIPISSIIGSLAKDKFCNVLGHPISKATWTDSSDSDILNRFVRICRNISHYYSGSSKKKNLYRIKYILRLCCVKTLARKHKSTVRAFLKRLGSGLLEEFLTGEDQVLSLIFQRSDYASKRLYRVRVWYLDILYLNDLVNHE</sequence>
<gene>
    <name evidence="1" type="primary">matK</name>
</gene>
<feature type="chain" id="PRO_0000143710" description="Maturase K">
    <location>
        <begin position="1"/>
        <end position="502"/>
    </location>
</feature>
<name>MATK_SISIR</name>
<protein>
    <recommendedName>
        <fullName evidence="1">Maturase K</fullName>
    </recommendedName>
    <alternativeName>
        <fullName evidence="1">Intron maturase</fullName>
    </alternativeName>
</protein>
<keyword id="KW-0150">Chloroplast</keyword>
<keyword id="KW-0507">mRNA processing</keyword>
<keyword id="KW-0934">Plastid</keyword>
<keyword id="KW-0694">RNA-binding</keyword>
<keyword id="KW-0819">tRNA processing</keyword>
<dbReference type="EMBL" id="AF144366">
    <property type="protein sequence ID" value="AAG43335.1"/>
    <property type="molecule type" value="Genomic_DNA"/>
</dbReference>
<dbReference type="GO" id="GO:0009507">
    <property type="term" value="C:chloroplast"/>
    <property type="evidence" value="ECO:0007669"/>
    <property type="project" value="UniProtKB-SubCell"/>
</dbReference>
<dbReference type="GO" id="GO:0003723">
    <property type="term" value="F:RNA binding"/>
    <property type="evidence" value="ECO:0007669"/>
    <property type="project" value="UniProtKB-KW"/>
</dbReference>
<dbReference type="GO" id="GO:0006397">
    <property type="term" value="P:mRNA processing"/>
    <property type="evidence" value="ECO:0007669"/>
    <property type="project" value="UniProtKB-KW"/>
</dbReference>
<dbReference type="GO" id="GO:0008380">
    <property type="term" value="P:RNA splicing"/>
    <property type="evidence" value="ECO:0007669"/>
    <property type="project" value="UniProtKB-UniRule"/>
</dbReference>
<dbReference type="GO" id="GO:0008033">
    <property type="term" value="P:tRNA processing"/>
    <property type="evidence" value="ECO:0007669"/>
    <property type="project" value="UniProtKB-KW"/>
</dbReference>
<dbReference type="HAMAP" id="MF_01390">
    <property type="entry name" value="MatK"/>
    <property type="match status" value="1"/>
</dbReference>
<dbReference type="InterPro" id="IPR024937">
    <property type="entry name" value="Domain_X"/>
</dbReference>
<dbReference type="InterPro" id="IPR002866">
    <property type="entry name" value="Maturase_MatK"/>
</dbReference>
<dbReference type="InterPro" id="IPR024942">
    <property type="entry name" value="Maturase_MatK_N"/>
</dbReference>
<dbReference type="PANTHER" id="PTHR34811">
    <property type="entry name" value="MATURASE K"/>
    <property type="match status" value="1"/>
</dbReference>
<dbReference type="PANTHER" id="PTHR34811:SF1">
    <property type="entry name" value="MATURASE K"/>
    <property type="match status" value="1"/>
</dbReference>
<dbReference type="Pfam" id="PF01348">
    <property type="entry name" value="Intron_maturas2"/>
    <property type="match status" value="1"/>
</dbReference>
<dbReference type="Pfam" id="PF01824">
    <property type="entry name" value="MatK_N"/>
    <property type="match status" value="1"/>
</dbReference>
<accession>Q9GF29</accession>
<geneLocation type="chloroplast"/>
<evidence type="ECO:0000255" key="1">
    <source>
        <dbReference type="HAMAP-Rule" id="MF_01390"/>
    </source>
</evidence>
<organism>
    <name type="scientific">Sisymbrium irio</name>
    <name type="common">London rocket</name>
    <dbReference type="NCBI Taxonomy" id="3730"/>
    <lineage>
        <taxon>Eukaryota</taxon>
        <taxon>Viridiplantae</taxon>
        <taxon>Streptophyta</taxon>
        <taxon>Embryophyta</taxon>
        <taxon>Tracheophyta</taxon>
        <taxon>Spermatophyta</taxon>
        <taxon>Magnoliopsida</taxon>
        <taxon>eudicotyledons</taxon>
        <taxon>Gunneridae</taxon>
        <taxon>Pentapetalae</taxon>
        <taxon>rosids</taxon>
        <taxon>malvids</taxon>
        <taxon>Brassicales</taxon>
        <taxon>Brassicaceae</taxon>
        <taxon>Sisymbrieae</taxon>
        <taxon>Sisymbrium</taxon>
    </lineage>
</organism>
<reference key="1">
    <citation type="journal article" date="2001" name="Am. J. Bot.">
        <title>Molecular systematics of the Brassicaceae: evidence from coding plastidic matK and nuclear Chs sequences.</title>
        <authorList>
            <person name="Koch M."/>
            <person name="Haubold B."/>
            <person name="Mitchell-Olds T."/>
        </authorList>
    </citation>
    <scope>NUCLEOTIDE SEQUENCE [GENOMIC DNA]</scope>
</reference>
<proteinExistence type="inferred from homology"/>